<name>RL29_TREPA</name>
<organism>
    <name type="scientific">Treponema pallidum (strain Nichols)</name>
    <dbReference type="NCBI Taxonomy" id="243276"/>
    <lineage>
        <taxon>Bacteria</taxon>
        <taxon>Pseudomonadati</taxon>
        <taxon>Spirochaetota</taxon>
        <taxon>Spirochaetia</taxon>
        <taxon>Spirochaetales</taxon>
        <taxon>Treponemataceae</taxon>
        <taxon>Treponema</taxon>
    </lineage>
</organism>
<comment type="similarity">
    <text evidence="1">Belongs to the universal ribosomal protein uL29 family.</text>
</comment>
<reference key="1">
    <citation type="journal article" date="1998" name="Science">
        <title>Complete genome sequence of Treponema pallidum, the syphilis spirochete.</title>
        <authorList>
            <person name="Fraser C.M."/>
            <person name="Norris S.J."/>
            <person name="Weinstock G.M."/>
            <person name="White O."/>
            <person name="Sutton G.G."/>
            <person name="Dodson R.J."/>
            <person name="Gwinn M.L."/>
            <person name="Hickey E.K."/>
            <person name="Clayton R.A."/>
            <person name="Ketchum K.A."/>
            <person name="Sodergren E."/>
            <person name="Hardham J.M."/>
            <person name="McLeod M.P."/>
            <person name="Salzberg S.L."/>
            <person name="Peterson J.D."/>
            <person name="Khalak H.G."/>
            <person name="Richardson D.L."/>
            <person name="Howell J.K."/>
            <person name="Chidambaram M."/>
            <person name="Utterback T.R."/>
            <person name="McDonald L.A."/>
            <person name="Artiach P."/>
            <person name="Bowman C."/>
            <person name="Cotton M.D."/>
            <person name="Fujii C."/>
            <person name="Garland S.A."/>
            <person name="Hatch B."/>
            <person name="Horst K."/>
            <person name="Roberts K.M."/>
            <person name="Sandusky M."/>
            <person name="Weidman J.F."/>
            <person name="Smith H.O."/>
            <person name="Venter J.C."/>
        </authorList>
    </citation>
    <scope>NUCLEOTIDE SEQUENCE [LARGE SCALE GENOMIC DNA]</scope>
    <source>
        <strain>Nichols</strain>
    </source>
</reference>
<keyword id="KW-1185">Reference proteome</keyword>
<keyword id="KW-0687">Ribonucleoprotein</keyword>
<keyword id="KW-0689">Ribosomal protein</keyword>
<feature type="chain" id="PRO_0000130487" description="Large ribosomal subunit protein uL29">
    <location>
        <begin position="1"/>
        <end position="72"/>
    </location>
</feature>
<proteinExistence type="inferred from homology"/>
<sequence>MGRGGCAQLSYSELLSRRRELERKYLDLRFQLVVEHVDNKLMKRILRRQIAAVNTFLRHKELTELEKRGVRE</sequence>
<accession>O83227</accession>
<protein>
    <recommendedName>
        <fullName evidence="1">Large ribosomal subunit protein uL29</fullName>
    </recommendedName>
    <alternativeName>
        <fullName>50S ribosomal protein L29</fullName>
    </alternativeName>
</protein>
<evidence type="ECO:0000305" key="1"/>
<dbReference type="EMBL" id="AE000520">
    <property type="protein sequence ID" value="AAC65182.1"/>
    <property type="molecule type" value="Genomic_DNA"/>
</dbReference>
<dbReference type="PIR" id="G71355">
    <property type="entry name" value="G71355"/>
</dbReference>
<dbReference type="RefSeq" id="WP_010881644.1">
    <property type="nucleotide sequence ID" value="NC_021490.2"/>
</dbReference>
<dbReference type="SMR" id="O83227"/>
<dbReference type="IntAct" id="O83227">
    <property type="interactions" value="17"/>
</dbReference>
<dbReference type="STRING" id="243276.TP_0197"/>
<dbReference type="EnsemblBacteria" id="AAC65182">
    <property type="protein sequence ID" value="AAC65182"/>
    <property type="gene ID" value="TP_0197"/>
</dbReference>
<dbReference type="GeneID" id="93875985"/>
<dbReference type="KEGG" id="tpa:TP_0197"/>
<dbReference type="KEGG" id="tpw:TPANIC_0197"/>
<dbReference type="eggNOG" id="COG0255">
    <property type="taxonomic scope" value="Bacteria"/>
</dbReference>
<dbReference type="HOGENOM" id="CLU_158491_5_0_12"/>
<dbReference type="OrthoDB" id="371096at2"/>
<dbReference type="Proteomes" id="UP000000811">
    <property type="component" value="Chromosome"/>
</dbReference>
<dbReference type="GO" id="GO:1990904">
    <property type="term" value="C:ribonucleoprotein complex"/>
    <property type="evidence" value="ECO:0007669"/>
    <property type="project" value="UniProtKB-KW"/>
</dbReference>
<dbReference type="GO" id="GO:0005840">
    <property type="term" value="C:ribosome"/>
    <property type="evidence" value="ECO:0007669"/>
    <property type="project" value="UniProtKB-KW"/>
</dbReference>
<dbReference type="GO" id="GO:0003735">
    <property type="term" value="F:structural constituent of ribosome"/>
    <property type="evidence" value="ECO:0007669"/>
    <property type="project" value="InterPro"/>
</dbReference>
<dbReference type="GO" id="GO:0006412">
    <property type="term" value="P:translation"/>
    <property type="evidence" value="ECO:0007669"/>
    <property type="project" value="UniProtKB-UniRule"/>
</dbReference>
<dbReference type="Gene3D" id="1.10.287.310">
    <property type="match status" value="1"/>
</dbReference>
<dbReference type="HAMAP" id="MF_00374">
    <property type="entry name" value="Ribosomal_uL29"/>
    <property type="match status" value="1"/>
</dbReference>
<dbReference type="InterPro" id="IPR001854">
    <property type="entry name" value="Ribosomal_uL29"/>
</dbReference>
<dbReference type="InterPro" id="IPR036049">
    <property type="entry name" value="Ribosomal_uL29_sf"/>
</dbReference>
<dbReference type="NCBIfam" id="TIGR00012">
    <property type="entry name" value="L29"/>
    <property type="match status" value="1"/>
</dbReference>
<dbReference type="Pfam" id="PF00831">
    <property type="entry name" value="Ribosomal_L29"/>
    <property type="match status" value="1"/>
</dbReference>
<dbReference type="SUPFAM" id="SSF46561">
    <property type="entry name" value="Ribosomal protein L29 (L29p)"/>
    <property type="match status" value="1"/>
</dbReference>
<gene>
    <name type="primary">rpmC</name>
    <name type="ordered locus">TP_0197</name>
</gene>